<keyword id="KW-0007">Acetylation</keyword>
<keyword id="KW-0025">Alternative splicing</keyword>
<keyword id="KW-1015">Disulfide bond</keyword>
<keyword id="KW-0396">Initiation factor</keyword>
<keyword id="KW-0648">Protein biosynthesis</keyword>
<keyword id="KW-1185">Reference proteome</keyword>
<keyword id="KW-0694">RNA-binding</keyword>
<keyword id="KW-0810">Translation regulation</keyword>
<comment type="function">
    <text evidence="4 7">Recognizes and binds the 7-methylguanosine-containing mRNA cap during an early step in the initiation of protein synthesis and facilitates ribosome binding by inducing the unwinding of the mRNAs secondary structures. Mediates susceptibility to Turnipmosaic potyvirus (TuMV) and Tobacco etch potyvirus (TEV).</text>
</comment>
<comment type="subunit">
    <text evidence="3 5 6">EIF4F is a multi-subunit complex, the composition of which varies with external and internal environmental conditions. It is composed of at least EIF4A, EIF4E and EIF4G. EIF4E is also known to interact with other partners. In higher plants two isoforms of EIF4F have been identified, named isoform EIF4F and isoform EIF(iso)4F. Isoform EIF4F has subunits p220 and p26, whereas isoform EIF(iso)4F has subunits p82 and p28. This isoform interacts with the viral protein genome linked (VPg)-proteinase of turnip mosaic potyvirus. Interacts directly with LOX2. Interacts with BTF3 (PubMed:15716105).</text>
</comment>
<comment type="interaction">
    <interactant intactId="EBI-1770425">
        <id>O04663</id>
    </interactant>
    <interactant intactId="EBI-1770592">
        <id>Q9SMW7</id>
        <label>BTF3</label>
    </interactant>
    <organismsDiffer>false</organismsDiffer>
    <experiments>2</experiments>
</comment>
<comment type="interaction">
    <interactant intactId="EBI-1770425">
        <id>O04663</id>
    </interactant>
    <interactant intactId="EBI-1770437">
        <id>P38418</id>
        <label>LOX2</label>
    </interactant>
    <organismsDiffer>false</organismsDiffer>
    <experiments>7</experiments>
</comment>
<comment type="interaction">
    <interactant intactId="EBI-1770425">
        <id>O04663</id>
    </interactant>
    <interactant intactId="EBI-1770460">
        <id>Q03389</id>
    </interactant>
    <organismsDiffer>true</organismsDiffer>
    <experiments>3</experiments>
</comment>
<comment type="alternative products">
    <event type="alternative splicing"/>
    <isoform>
        <id>O04663-1</id>
        <name>1</name>
        <sequence type="displayed"/>
    </isoform>
    <isoform>
        <id>O04663-2</id>
        <name>2</name>
        <sequence type="described" ref="VSP_037805 VSP_037806"/>
    </isoform>
</comment>
<comment type="tissue specificity">
    <text evidence="7">Abundant in floral organs and in young developing tissues.</text>
</comment>
<comment type="PTM">
    <text evidence="1">According to the redox status, the Cys-97-Cys-138 disulfide bridge may have a role in regulating protein function by affecting its ability to bind capped mRNA.</text>
</comment>
<comment type="disruption phenotype">
    <text evidence="4">Decreased susceptibility to TuMV and TEV.</text>
</comment>
<comment type="similarity">
    <text evidence="9">Belongs to the eukaryotic initiation factor 4E family.</text>
</comment>
<comment type="sequence caution" evidence="9">
    <conflict type="erroneous initiation">
        <sequence resource="EMBL-CDS" id="AAB66906"/>
    </conflict>
    <text>Extended N-terminus.</text>
</comment>
<proteinExistence type="evidence at protein level"/>
<accession>O04663</accession>
<accession>Q3E8N6</accession>
<accession>Q546X5</accession>
<accession>Q9SAN8</accession>
<gene>
    <name type="primary">EIF(ISO)4E</name>
    <name type="synonym">LSP1</name>
    <name type="ordered locus">At5g35620</name>
    <name type="ORF">MJE4.8</name>
</gene>
<organism>
    <name type="scientific">Arabidopsis thaliana</name>
    <name type="common">Mouse-ear cress</name>
    <dbReference type="NCBI Taxonomy" id="3702"/>
    <lineage>
        <taxon>Eukaryota</taxon>
        <taxon>Viridiplantae</taxon>
        <taxon>Streptophyta</taxon>
        <taxon>Embryophyta</taxon>
        <taxon>Tracheophyta</taxon>
        <taxon>Spermatophyta</taxon>
        <taxon>Magnoliopsida</taxon>
        <taxon>eudicotyledons</taxon>
        <taxon>Gunneridae</taxon>
        <taxon>Pentapetalae</taxon>
        <taxon>rosids</taxon>
        <taxon>malvids</taxon>
        <taxon>Brassicales</taxon>
        <taxon>Brassicaceae</taxon>
        <taxon>Camelineae</taxon>
        <taxon>Arabidopsis</taxon>
    </lineage>
</organism>
<reference key="1">
    <citation type="journal article" date="1997" name="Virology">
        <title>Interaction of the viral protein genome linked of turnip mosaic potyvirus with the translational eukaryotic initiation factor (iso) 4E of Arabidopsis thaliana using the yeast two-hybrid system.</title>
        <authorList>
            <person name="Wittmann S."/>
            <person name="Chatel H."/>
            <person name="Fortin M.G."/>
            <person name="Laliberte J.F."/>
        </authorList>
    </citation>
    <scope>NUCLEOTIDE SEQUENCE [MRNA] (ISOFORM 1)</scope>
    <scope>FUNCTION</scope>
    <scope>TISSUE SPECIFICITY</scope>
</reference>
<reference key="2">
    <citation type="journal article" date="2002" name="Curr. Biol.">
        <title>Loss-of-susceptibility mutants of Arabidopsis thaliana reveal an essential role for eIF(iso)4E during potyvirus infection.</title>
        <authorList>
            <person name="Lellis A.D."/>
            <person name="Kasschau K.D."/>
            <person name="Whitham S.A."/>
            <person name="Carrington J.C."/>
        </authorList>
    </citation>
    <scope>NUCLEOTIDE SEQUENCE [GENOMIC DNA]</scope>
    <scope>FUNCTION</scope>
    <scope>DISRUPTION PHENOTYPE</scope>
    <source>
        <strain>cv. C24</strain>
    </source>
</reference>
<reference key="3">
    <citation type="submission" date="1997-01" db="EMBL/GenBank/DDBJ databases">
        <authorList>
            <person name="Rodriguez C.M."/>
            <person name="Freire M.A."/>
            <person name="Robaglia C."/>
        </authorList>
    </citation>
    <scope>NUCLEOTIDE SEQUENCE [MRNA] (ISOFORM 1)</scope>
</reference>
<reference key="4">
    <citation type="journal article" date="1998" name="DNA Res.">
        <title>Structural analysis of Arabidopsis thaliana chromosome 5. VI. Sequence features of the regions of 1,367,185 bp covered by 19 physically assigned P1 and TAC clones.</title>
        <authorList>
            <person name="Kotani H."/>
            <person name="Nakamura Y."/>
            <person name="Sato S."/>
            <person name="Asamizu E."/>
            <person name="Kaneko T."/>
            <person name="Miyajima N."/>
            <person name="Tabata S."/>
        </authorList>
    </citation>
    <scope>NUCLEOTIDE SEQUENCE [LARGE SCALE GENOMIC DNA]</scope>
    <source>
        <strain>cv. Columbia</strain>
    </source>
</reference>
<reference key="5">
    <citation type="journal article" date="2017" name="Plant J.">
        <title>Araport11: a complete reannotation of the Arabidopsis thaliana reference genome.</title>
        <authorList>
            <person name="Cheng C.Y."/>
            <person name="Krishnakumar V."/>
            <person name="Chan A.P."/>
            <person name="Thibaud-Nissen F."/>
            <person name="Schobel S."/>
            <person name="Town C.D."/>
        </authorList>
    </citation>
    <scope>GENOME REANNOTATION</scope>
    <source>
        <strain>cv. Columbia</strain>
    </source>
</reference>
<reference key="6">
    <citation type="journal article" date="2003" name="Science">
        <title>Empirical analysis of transcriptional activity in the Arabidopsis genome.</title>
        <authorList>
            <person name="Yamada K."/>
            <person name="Lim J."/>
            <person name="Dale J.M."/>
            <person name="Chen H."/>
            <person name="Shinn P."/>
            <person name="Palm C.J."/>
            <person name="Southwick A.M."/>
            <person name="Wu H.C."/>
            <person name="Kim C.J."/>
            <person name="Nguyen M."/>
            <person name="Pham P.K."/>
            <person name="Cheuk R.F."/>
            <person name="Karlin-Newmann G."/>
            <person name="Liu S.X."/>
            <person name="Lam B."/>
            <person name="Sakano H."/>
            <person name="Wu T."/>
            <person name="Yu G."/>
            <person name="Miranda M."/>
            <person name="Quach H.L."/>
            <person name="Tripp M."/>
            <person name="Chang C.H."/>
            <person name="Lee J.M."/>
            <person name="Toriumi M.J."/>
            <person name="Chan M.M."/>
            <person name="Tang C.C."/>
            <person name="Onodera C.S."/>
            <person name="Deng J.M."/>
            <person name="Akiyama K."/>
            <person name="Ansari Y."/>
            <person name="Arakawa T."/>
            <person name="Banh J."/>
            <person name="Banno F."/>
            <person name="Bowser L."/>
            <person name="Brooks S.Y."/>
            <person name="Carninci P."/>
            <person name="Chao Q."/>
            <person name="Choy N."/>
            <person name="Enju A."/>
            <person name="Goldsmith A.D."/>
            <person name="Gurjal M."/>
            <person name="Hansen N.F."/>
            <person name="Hayashizaki Y."/>
            <person name="Johnson-Hopson C."/>
            <person name="Hsuan V.W."/>
            <person name="Iida K."/>
            <person name="Karnes M."/>
            <person name="Khan S."/>
            <person name="Koesema E."/>
            <person name="Ishida J."/>
            <person name="Jiang P.X."/>
            <person name="Jones T."/>
            <person name="Kawai J."/>
            <person name="Kamiya A."/>
            <person name="Meyers C."/>
            <person name="Nakajima M."/>
            <person name="Narusaka M."/>
            <person name="Seki M."/>
            <person name="Sakurai T."/>
            <person name="Satou M."/>
            <person name="Tamse R."/>
            <person name="Vaysberg M."/>
            <person name="Wallender E.K."/>
            <person name="Wong C."/>
            <person name="Yamamura Y."/>
            <person name="Yuan S."/>
            <person name="Shinozaki K."/>
            <person name="Davis R.W."/>
            <person name="Theologis A."/>
            <person name="Ecker J.R."/>
        </authorList>
    </citation>
    <scope>NUCLEOTIDE SEQUENCE [LARGE SCALE MRNA] (ISOFORM 1)</scope>
    <source>
        <strain>cv. Columbia</strain>
    </source>
</reference>
<reference key="7">
    <citation type="journal article" date="2004" name="Genome Res.">
        <title>Whole genome sequence comparisons and 'full-length' cDNA sequences: a combined approach to evaluate and improve Arabidopsis genome annotation.</title>
        <authorList>
            <person name="Castelli V."/>
            <person name="Aury J.-M."/>
            <person name="Jaillon O."/>
            <person name="Wincker P."/>
            <person name="Clepet C."/>
            <person name="Menard M."/>
            <person name="Cruaud C."/>
            <person name="Quetier F."/>
            <person name="Scarpelli C."/>
            <person name="Schaechter V."/>
            <person name="Temple G."/>
            <person name="Caboche M."/>
            <person name="Weissenbach J."/>
            <person name="Salanoubat M."/>
        </authorList>
    </citation>
    <scope>NUCLEOTIDE SEQUENCE [LARGE SCALE MRNA] (ISOFORM 2)</scope>
    <source>
        <strain>cv. Columbia</strain>
    </source>
</reference>
<reference key="8">
    <citation type="submission" date="2002-03" db="EMBL/GenBank/DDBJ databases">
        <title>Full-length cDNA from Arabidopsis thaliana.</title>
        <authorList>
            <person name="Brover V.V."/>
            <person name="Troukhan M.E."/>
            <person name="Alexandrov N.A."/>
            <person name="Lu Y.-P."/>
            <person name="Flavell R.B."/>
            <person name="Feldmann K.A."/>
        </authorList>
    </citation>
    <scope>NUCLEOTIDE SEQUENCE [LARGE SCALE MRNA] (ISOFORM 1)</scope>
</reference>
<reference key="9">
    <citation type="journal article" date="2000" name="Plant Mol. Biol.">
        <title>Plant lipoxygenase 2 is a translation initiation factor-4E-binding protein.</title>
        <authorList>
            <person name="Freire M.A."/>
            <person name="Tourneur C."/>
            <person name="Granier F."/>
            <person name="Camonis J."/>
            <person name="El Amrani A."/>
            <person name="Browning K.S."/>
            <person name="Robaglia C."/>
        </authorList>
    </citation>
    <scope>INTERACTION WITH LOX2</scope>
</reference>
<reference key="10">
    <citation type="journal article" date="2005" name="Gene">
        <title>Translation initiation factor (iso) 4E interacts with BTF3, the beta subunit of the nascent polypeptide-associated complex.</title>
        <authorList>
            <person name="Freire M.A."/>
        </authorList>
    </citation>
    <scope>INTERACTION WITH BTF3</scope>
</reference>
<reference key="11">
    <citation type="journal article" date="2006" name="Trends Plant Sci.">
        <title>Translation initiation factors: a weak link in plant RNA virus infection.</title>
        <authorList>
            <person name="Robaglia C."/>
            <person name="Caranta C."/>
        </authorList>
    </citation>
    <scope>REVIEW</scope>
    <scope>SUBUNIT</scope>
</reference>
<reference key="12">
    <citation type="journal article" date="2012" name="Mol. Cell. Proteomics">
        <title>Comparative large-scale characterisation of plant vs. mammal proteins reveals similar and idiosyncratic N-alpha acetylation features.</title>
        <authorList>
            <person name="Bienvenut W.V."/>
            <person name="Sumpton D."/>
            <person name="Martinez A."/>
            <person name="Lilla S."/>
            <person name="Espagne C."/>
            <person name="Meinnel T."/>
            <person name="Giglione C."/>
        </authorList>
    </citation>
    <scope>ACETYLATION [LARGE SCALE ANALYSIS] AT ALA-2</scope>
    <scope>CLEAVAGE OF INITIATOR METHIONINE [LARGE SCALE ANALYSIS]</scope>
    <scope>IDENTIFICATION BY MASS SPECTROMETRY [LARGE SCALE ANALYSIS]</scope>
</reference>
<sequence>MATDDVNEPLPAAAELPATEAEKQPHKLERKWSFWFDNQSKKGAAWGASLRKAYTFDTVEDFWGLHETIFQTSKLTANAEIHLFKAGVEPKWEDPECANGGKWTWVVTANRKEALDKGWLETLMALIGEQFDEADEICGVVASVRPQSKQDKLSLWTRTKSNEAVLMGIGKKWKEILDVTDKITFNNHDDSRRSRFTV</sequence>
<protein>
    <recommendedName>
        <fullName>Eukaryotic translation initiation factor isoform 4E</fullName>
        <shortName>eIF(iso)4E</shortName>
    </recommendedName>
    <alternativeName>
        <fullName>Protein LOSS OF SUSCEPTIBILITY TO POTYVIRUS 1</fullName>
    </alternativeName>
    <alternativeName>
        <fullName>eIF-(iso)4F 25 kDa subunit</fullName>
    </alternativeName>
    <alternativeName>
        <fullName>eIF-(iso)4F p28 subunit</fullName>
    </alternativeName>
    <alternativeName>
        <fullName>eIF4Eiso protein</fullName>
    </alternativeName>
    <alternativeName>
        <fullName>mRNA cap-binding protein</fullName>
    </alternativeName>
</protein>
<dbReference type="EMBL" id="U62044">
    <property type="protein sequence ID" value="AAB66906.1"/>
    <property type="status" value="ALT_INIT"/>
    <property type="molecule type" value="mRNA"/>
</dbReference>
<dbReference type="EMBL" id="AF538308">
    <property type="protein sequence ID" value="AAN06825.1"/>
    <property type="molecule type" value="Genomic_DNA"/>
</dbReference>
<dbReference type="EMBL" id="Y10547">
    <property type="protein sequence ID" value="CAA71579.1"/>
    <property type="molecule type" value="mRNA"/>
</dbReference>
<dbReference type="EMBL" id="AB013393">
    <property type="protein sequence ID" value="BAB09303.1"/>
    <property type="molecule type" value="Genomic_DNA"/>
</dbReference>
<dbReference type="EMBL" id="CP002688">
    <property type="protein sequence ID" value="AED93991.1"/>
    <property type="molecule type" value="Genomic_DNA"/>
</dbReference>
<dbReference type="EMBL" id="CP002688">
    <property type="protein sequence ID" value="AED93992.1"/>
    <property type="molecule type" value="Genomic_DNA"/>
</dbReference>
<dbReference type="EMBL" id="CP002688">
    <property type="protein sequence ID" value="ANM70787.1"/>
    <property type="molecule type" value="Genomic_DNA"/>
</dbReference>
<dbReference type="EMBL" id="AY054630">
    <property type="protein sequence ID" value="AAK96821.1"/>
    <property type="molecule type" value="mRNA"/>
</dbReference>
<dbReference type="EMBL" id="AY081514">
    <property type="protein sequence ID" value="AAM10076.1"/>
    <property type="molecule type" value="mRNA"/>
</dbReference>
<dbReference type="EMBL" id="BX831945">
    <property type="status" value="NOT_ANNOTATED_CDS"/>
    <property type="molecule type" value="mRNA"/>
</dbReference>
<dbReference type="EMBL" id="AY086315">
    <property type="protein sequence ID" value="AAM64386.1"/>
    <property type="molecule type" value="mRNA"/>
</dbReference>
<dbReference type="RefSeq" id="NP_001332369.1">
    <molecule id="O04663-1"/>
    <property type="nucleotide sequence ID" value="NM_001344112.1"/>
</dbReference>
<dbReference type="RefSeq" id="NP_198412.1">
    <molecule id="O04663-1"/>
    <property type="nucleotide sequence ID" value="NM_122953.3"/>
</dbReference>
<dbReference type="RefSeq" id="NP_974852.1">
    <molecule id="O04663-2"/>
    <property type="nucleotide sequence ID" value="NM_203123.1"/>
</dbReference>
<dbReference type="SMR" id="O04663"/>
<dbReference type="BioGRID" id="18787">
    <property type="interactions" value="5"/>
</dbReference>
<dbReference type="FunCoup" id="O04663">
    <property type="interactions" value="3487"/>
</dbReference>
<dbReference type="IntAct" id="O04663">
    <property type="interactions" value="9"/>
</dbReference>
<dbReference type="MINT" id="O04663"/>
<dbReference type="STRING" id="3702.O04663"/>
<dbReference type="iPTMnet" id="O04663"/>
<dbReference type="PaxDb" id="3702-AT5G35620.1"/>
<dbReference type="ProteomicsDB" id="250674">
    <molecule id="O04663-1"/>
</dbReference>
<dbReference type="EnsemblPlants" id="AT5G35620.1">
    <molecule id="O04663-1"/>
    <property type="protein sequence ID" value="AT5G35620.1"/>
    <property type="gene ID" value="AT5G35620"/>
</dbReference>
<dbReference type="EnsemblPlants" id="AT5G35620.2">
    <molecule id="O04663-2"/>
    <property type="protein sequence ID" value="AT5G35620.2"/>
    <property type="gene ID" value="AT5G35620"/>
</dbReference>
<dbReference type="EnsemblPlants" id="AT5G35620.3">
    <molecule id="O04663-1"/>
    <property type="protein sequence ID" value="AT5G35620.3"/>
    <property type="gene ID" value="AT5G35620"/>
</dbReference>
<dbReference type="GeneID" id="833534"/>
<dbReference type="Gramene" id="AT5G35620.1">
    <molecule id="O04663-1"/>
    <property type="protein sequence ID" value="AT5G35620.1"/>
    <property type="gene ID" value="AT5G35620"/>
</dbReference>
<dbReference type="Gramene" id="AT5G35620.2">
    <molecule id="O04663-2"/>
    <property type="protein sequence ID" value="AT5G35620.2"/>
    <property type="gene ID" value="AT5G35620"/>
</dbReference>
<dbReference type="Gramene" id="AT5G35620.3">
    <molecule id="O04663-1"/>
    <property type="protein sequence ID" value="AT5G35620.3"/>
    <property type="gene ID" value="AT5G35620"/>
</dbReference>
<dbReference type="KEGG" id="ath:AT5G35620"/>
<dbReference type="Araport" id="AT5G35620"/>
<dbReference type="TAIR" id="AT5G35620">
    <property type="gene designation" value="LSP1"/>
</dbReference>
<dbReference type="eggNOG" id="KOG1670">
    <property type="taxonomic scope" value="Eukaryota"/>
</dbReference>
<dbReference type="InParanoid" id="O04663"/>
<dbReference type="OMA" id="EEFWAIV"/>
<dbReference type="OrthoDB" id="590761at2759"/>
<dbReference type="PhylomeDB" id="O04663"/>
<dbReference type="PRO" id="PR:O04663"/>
<dbReference type="Proteomes" id="UP000006548">
    <property type="component" value="Chromosome 5"/>
</dbReference>
<dbReference type="ExpressionAtlas" id="O04663">
    <property type="expression patterns" value="baseline and differential"/>
</dbReference>
<dbReference type="GO" id="GO:0005737">
    <property type="term" value="C:cytoplasm"/>
    <property type="evidence" value="ECO:0007005"/>
    <property type="project" value="TAIR"/>
</dbReference>
<dbReference type="GO" id="GO:0005634">
    <property type="term" value="C:nucleus"/>
    <property type="evidence" value="ECO:0007005"/>
    <property type="project" value="TAIR"/>
</dbReference>
<dbReference type="GO" id="GO:0009536">
    <property type="term" value="C:plastid"/>
    <property type="evidence" value="ECO:0007005"/>
    <property type="project" value="TAIR"/>
</dbReference>
<dbReference type="GO" id="GO:0000340">
    <property type="term" value="F:RNA 7-methylguanosine cap binding"/>
    <property type="evidence" value="ECO:0000304"/>
    <property type="project" value="TAIR"/>
</dbReference>
<dbReference type="GO" id="GO:0003743">
    <property type="term" value="F:translation initiation factor activity"/>
    <property type="evidence" value="ECO:0000304"/>
    <property type="project" value="TAIR"/>
</dbReference>
<dbReference type="GO" id="GO:0050687">
    <property type="term" value="P:negative regulation of defense response to virus"/>
    <property type="evidence" value="ECO:0000315"/>
    <property type="project" value="UniProtKB"/>
</dbReference>
<dbReference type="GO" id="GO:0006417">
    <property type="term" value="P:regulation of translation"/>
    <property type="evidence" value="ECO:0007669"/>
    <property type="project" value="UniProtKB-KW"/>
</dbReference>
<dbReference type="GO" id="GO:0009615">
    <property type="term" value="P:response to virus"/>
    <property type="evidence" value="ECO:0000315"/>
    <property type="project" value="TAIR"/>
</dbReference>
<dbReference type="FunFam" id="3.30.760.10:FF:000003">
    <property type="entry name" value="Eukaryotic translation initiation factor 4E"/>
    <property type="match status" value="1"/>
</dbReference>
<dbReference type="Gene3D" id="3.30.760.10">
    <property type="entry name" value="RNA Cap, Translation Initiation Factor Eif4e"/>
    <property type="match status" value="1"/>
</dbReference>
<dbReference type="InterPro" id="IPR023398">
    <property type="entry name" value="TIF_eIF4e-like"/>
</dbReference>
<dbReference type="InterPro" id="IPR001040">
    <property type="entry name" value="TIF_eIF_4E"/>
</dbReference>
<dbReference type="InterPro" id="IPR019770">
    <property type="entry name" value="TIF_eIF_4E_CS"/>
</dbReference>
<dbReference type="PANTHER" id="PTHR11960">
    <property type="entry name" value="EUKARYOTIC TRANSLATION INITIATION FACTOR 4E RELATED"/>
    <property type="match status" value="1"/>
</dbReference>
<dbReference type="PANTHER" id="PTHR11960:SF67">
    <property type="entry name" value="EUKARYOTIC TRANSLATION INITIATION FACTOR ISOFORM 4E"/>
    <property type="match status" value="1"/>
</dbReference>
<dbReference type="Pfam" id="PF01652">
    <property type="entry name" value="IF4E"/>
    <property type="match status" value="1"/>
</dbReference>
<dbReference type="SUPFAM" id="SSF55418">
    <property type="entry name" value="eIF4e-like"/>
    <property type="match status" value="1"/>
</dbReference>
<dbReference type="PROSITE" id="PS00813">
    <property type="entry name" value="IF4E"/>
    <property type="match status" value="1"/>
</dbReference>
<evidence type="ECO:0000250" key="1"/>
<evidence type="ECO:0000256" key="2">
    <source>
        <dbReference type="SAM" id="MobiDB-lite"/>
    </source>
</evidence>
<evidence type="ECO:0000269" key="3">
    <source>
    </source>
</evidence>
<evidence type="ECO:0000269" key="4">
    <source>
    </source>
</evidence>
<evidence type="ECO:0000269" key="5">
    <source>
    </source>
</evidence>
<evidence type="ECO:0000269" key="6">
    <source>
    </source>
</evidence>
<evidence type="ECO:0000269" key="7">
    <source>
    </source>
</evidence>
<evidence type="ECO:0000303" key="8">
    <source>
    </source>
</evidence>
<evidence type="ECO:0000305" key="9"/>
<evidence type="ECO:0007744" key="10">
    <source>
    </source>
</evidence>
<feature type="initiator methionine" description="Removed" evidence="10">
    <location>
        <position position="1"/>
    </location>
</feature>
<feature type="chain" id="PRO_0000193655" description="Eukaryotic translation initiation factor isoform 4E">
    <location>
        <begin position="2"/>
        <end position="198"/>
    </location>
</feature>
<feature type="region of interest" description="Disordered" evidence="2">
    <location>
        <begin position="1"/>
        <end position="25"/>
    </location>
</feature>
<feature type="compositionally biased region" description="Low complexity" evidence="2">
    <location>
        <begin position="8"/>
        <end position="19"/>
    </location>
</feature>
<feature type="binding site" evidence="1">
    <location>
        <begin position="46"/>
        <end position="47"/>
    </location>
    <ligand>
        <name>mRNA</name>
        <dbReference type="ChEBI" id="CHEBI:33699"/>
    </ligand>
    <ligandPart>
        <name>N(7)-methylguanosine 5'-triphosphate group</name>
        <dbReference type="ChEBI" id="CHEBI:74429"/>
        <note>m7GTP residue in mRNA cap</note>
    </ligandPart>
</feature>
<feature type="binding site" evidence="1">
    <location>
        <begin position="92"/>
        <end position="93"/>
    </location>
    <ligand>
        <name>mRNA</name>
        <dbReference type="ChEBI" id="CHEBI:33699"/>
    </ligand>
    <ligandPart>
        <name>N(7)-methylguanosine 5'-triphosphate group</name>
        <dbReference type="ChEBI" id="CHEBI:74429"/>
        <note>m7GTP residue in mRNA cap</note>
    </ligandPart>
</feature>
<feature type="binding site" evidence="1">
    <location>
        <begin position="145"/>
        <end position="152"/>
    </location>
    <ligand>
        <name>mRNA</name>
        <dbReference type="ChEBI" id="CHEBI:33699"/>
    </ligand>
    <ligandPart>
        <name>N(7)-methylguanosine 5'-triphosphate group</name>
        <dbReference type="ChEBI" id="CHEBI:74429"/>
        <note>m7GTP residue in mRNA cap</note>
    </ligandPart>
</feature>
<feature type="modified residue" description="N-acetylalanine" evidence="10">
    <location>
        <position position="2"/>
    </location>
</feature>
<feature type="disulfide bond" evidence="1">
    <location>
        <begin position="97"/>
        <end position="138"/>
    </location>
</feature>
<feature type="splice variant" id="VSP_037805" description="In isoform 2." evidence="8">
    <original>M</original>
    <variation>V</variation>
    <location>
        <position position="167"/>
    </location>
</feature>
<feature type="splice variant" id="VSP_037806" description="In isoform 2." evidence="8">
    <location>
        <begin position="168"/>
        <end position="198"/>
    </location>
</feature>
<feature type="sequence conflict" description="In Ref. 6; BX831945." evidence="9" ref="6">
    <original>V</original>
    <variation>F</variation>
    <location>
        <position position="144"/>
    </location>
</feature>
<name>IF4E4_ARATH</name>